<sequence length="297" mass="31021">MTSLPLGVKVEDSAFGKPAGGGAGQAPSAAAATAATMGADEEGAKPKVSPSLLPFSVEALMADHRKPGAKESALAASEGAQAAGGSAQPLGVRPGSLCAPDAPSSPRPLGHFSVGGLLKLPEDGLIKAESPEKPERTPWMQSPRFSPPPARRLSPPACTLRKHKTNRKPRTPFTTAQLLALERKFRQKQYLSIAERAEFSSSLSLTETQVKIWFQNRRAKAKRLQEAELEKLKMAAKPMLPPAAFGLSFPLGGPAAVAAAAGASLYGASGPFQRAALPVAPVGLYTAHVGYSMYHLT</sequence>
<accession>Q2VL78</accession>
<dbReference type="EMBL" id="DQ067487">
    <property type="protein sequence ID" value="AAZ30473.1"/>
    <property type="molecule type" value="Genomic_DNA"/>
</dbReference>
<dbReference type="EMBL" id="DQ067486">
    <property type="protein sequence ID" value="AAZ30473.1"/>
    <property type="status" value="JOINED"/>
    <property type="molecule type" value="Genomic_DNA"/>
</dbReference>
<dbReference type="SMR" id="Q2VL78"/>
<dbReference type="GO" id="GO:0034399">
    <property type="term" value="C:nuclear periphery"/>
    <property type="evidence" value="ECO:0000250"/>
    <property type="project" value="UniProtKB"/>
</dbReference>
<dbReference type="GO" id="GO:0000981">
    <property type="term" value="F:DNA-binding transcription factor activity, RNA polymerase II-specific"/>
    <property type="evidence" value="ECO:0007669"/>
    <property type="project" value="InterPro"/>
</dbReference>
<dbReference type="GO" id="GO:0000977">
    <property type="term" value="F:RNA polymerase II transcription regulatory region sequence-specific DNA binding"/>
    <property type="evidence" value="ECO:0007669"/>
    <property type="project" value="TreeGrafter"/>
</dbReference>
<dbReference type="GO" id="GO:0000976">
    <property type="term" value="F:transcription cis-regulatory region binding"/>
    <property type="evidence" value="ECO:0000250"/>
    <property type="project" value="UniProtKB"/>
</dbReference>
<dbReference type="GO" id="GO:0048598">
    <property type="term" value="P:embryonic morphogenesis"/>
    <property type="evidence" value="ECO:0007669"/>
    <property type="project" value="TreeGrafter"/>
</dbReference>
<dbReference type="GO" id="GO:0048839">
    <property type="term" value="P:inner ear development"/>
    <property type="evidence" value="ECO:0000250"/>
    <property type="project" value="UniProtKB"/>
</dbReference>
<dbReference type="GO" id="GO:0010629">
    <property type="term" value="P:negative regulation of gene expression"/>
    <property type="evidence" value="ECO:0000250"/>
    <property type="project" value="UniProtKB"/>
</dbReference>
<dbReference type="GO" id="GO:1901330">
    <property type="term" value="P:negative regulation of odontoblast differentiation"/>
    <property type="evidence" value="ECO:0000250"/>
    <property type="project" value="UniProtKB"/>
</dbReference>
<dbReference type="GO" id="GO:0043584">
    <property type="term" value="P:nose development"/>
    <property type="evidence" value="ECO:0000250"/>
    <property type="project" value="UniProtKB"/>
</dbReference>
<dbReference type="GO" id="GO:0045787">
    <property type="term" value="P:positive regulation of cell cycle"/>
    <property type="evidence" value="ECO:0000250"/>
    <property type="project" value="UniProtKB"/>
</dbReference>
<dbReference type="GO" id="GO:0042482">
    <property type="term" value="P:positive regulation of odontogenesis"/>
    <property type="evidence" value="ECO:0000250"/>
    <property type="project" value="UniProtKB"/>
</dbReference>
<dbReference type="GO" id="GO:0042481">
    <property type="term" value="P:regulation of odontogenesis"/>
    <property type="evidence" value="ECO:0000250"/>
    <property type="project" value="UniProtKB"/>
</dbReference>
<dbReference type="GO" id="GO:0060021">
    <property type="term" value="P:roof of mouth development"/>
    <property type="evidence" value="ECO:0000250"/>
    <property type="project" value="UniProtKB"/>
</dbReference>
<dbReference type="CDD" id="cd00086">
    <property type="entry name" value="homeodomain"/>
    <property type="match status" value="1"/>
</dbReference>
<dbReference type="FunFam" id="1.10.10.60:FF:000134">
    <property type="entry name" value="Homeobox protein MSX-1"/>
    <property type="match status" value="1"/>
</dbReference>
<dbReference type="Gene3D" id="1.10.10.60">
    <property type="entry name" value="Homeodomain-like"/>
    <property type="match status" value="1"/>
</dbReference>
<dbReference type="InterPro" id="IPR001356">
    <property type="entry name" value="HD"/>
</dbReference>
<dbReference type="InterPro" id="IPR020479">
    <property type="entry name" value="HD_metazoa"/>
</dbReference>
<dbReference type="InterPro" id="IPR017970">
    <property type="entry name" value="Homeobox_CS"/>
</dbReference>
<dbReference type="InterPro" id="IPR009057">
    <property type="entry name" value="Homeodomain-like_sf"/>
</dbReference>
<dbReference type="InterPro" id="IPR050674">
    <property type="entry name" value="Msh_Homeobox_Regulators"/>
</dbReference>
<dbReference type="PANTHER" id="PTHR24338">
    <property type="entry name" value="HOMEOBOX PROTEIN MSX"/>
    <property type="match status" value="1"/>
</dbReference>
<dbReference type="PANTHER" id="PTHR24338:SF8">
    <property type="entry name" value="HOMEOBOX PROTEIN MSX-1"/>
    <property type="match status" value="1"/>
</dbReference>
<dbReference type="Pfam" id="PF00046">
    <property type="entry name" value="Homeodomain"/>
    <property type="match status" value="1"/>
</dbReference>
<dbReference type="PRINTS" id="PR00024">
    <property type="entry name" value="HOMEOBOX"/>
</dbReference>
<dbReference type="SMART" id="SM00389">
    <property type="entry name" value="HOX"/>
    <property type="match status" value="1"/>
</dbReference>
<dbReference type="SUPFAM" id="SSF46689">
    <property type="entry name" value="Homeodomain-like"/>
    <property type="match status" value="1"/>
</dbReference>
<dbReference type="PROSITE" id="PS00027">
    <property type="entry name" value="HOMEOBOX_1"/>
    <property type="match status" value="1"/>
</dbReference>
<dbReference type="PROSITE" id="PS50071">
    <property type="entry name" value="HOMEOBOX_2"/>
    <property type="match status" value="1"/>
</dbReference>
<evidence type="ECO:0000250" key="1">
    <source>
        <dbReference type="UniProtKB" id="P13297"/>
    </source>
</evidence>
<evidence type="ECO:0000250" key="2">
    <source>
        <dbReference type="UniProtKB" id="P28360"/>
    </source>
</evidence>
<evidence type="ECO:0000255" key="3">
    <source>
        <dbReference type="PROSITE-ProRule" id="PRU00108"/>
    </source>
</evidence>
<evidence type="ECO:0000256" key="4">
    <source>
        <dbReference type="SAM" id="MobiDB-lite"/>
    </source>
</evidence>
<evidence type="ECO:0000305" key="5"/>
<comment type="function">
    <text evidence="1 2">Acts as a transcriptional repressor (By similarity). Capable of transcription autoinactivation (By similarity). Binds to the consensus sequence 5'-C/GTAAT-3' in downstream activin regulatory elements (DARE) in the gene promoter, thereby repressing the transcription of CGA/alpha-GSU and GNRHR (By similarity). Represses transcription of myoblast differentiation factors (By similarity). Binds to core enhancer regions in target gene promoters of myoblast differentiation factors with binding specificity facilitated by interaction with PIAS1 (By similarity). Regulates, in a stage-specific manner, a developmental program of gene expression in the fetal tooth bud that controls odontoblast differentiation and proliferation of dental mesenchymal cells (By similarity). At the bud stage, required for mesenchymal molar tooth bud development via facilitating reciprocal signaling between dental epithelial and mesenchymal cells (By similarity). May also regulate expression of Wnt antagonists such as DKK2 and SFPR2 in the developing tooth mesenchyme (By similarity). Required for BMP4 expression in dental mesenchyme cells (By similarity). Also, in response to BMP4, required for BMP4 expression in neighboring dental epithelial cells (By similarity). Required for maximal FGF4-induced expression of SDC1 in dental mesenchyme cells (By similarity). Also in response to SDC1, required for SDC1 expression in neighboring dental epithelial cells (By similarity). At the early bell stage, acts to drive proliferation of dental mesenchyme cells, however during the late bell stage acts as an homeostatic regulator of the cell cycle (By similarity). Regulates proliferation and inhibits premature mesenchymal odontogenesis during the bell stage via inhibition of the Wnt signaling component CTNNB1 and subsequent repression of the odontoblast differentiation factors BMP2, BMP4, LEF1, ALPL and BGLAP/OCN (By similarity). Additionally, required for correct development and fusion of the palatal shelves and embryonic mandibular formation (By similarity). Plays a role in embryonic bone formation of the middle ear, skull and nasal bones (By similarity). Required for correct formation and thickness of the nail plate (By similarity). May play a role in limb-pattern formation (By similarity).</text>
</comment>
<comment type="subunit">
    <text evidence="1">Interacts with CREBBP/CBP, TBP and SP1; interaction with these transcription activators may inhibit autoinactivation (By similarity). Interacts (via C-terminus) with PIAS1 (via N-terminus); the interaction is required for the localization of both proteins to the nuclear periphery and specific binding of MSX1 to the core enhancer region in target gene promoters (By similarity). Interacts with H1-5 (By similarity).</text>
</comment>
<comment type="subcellular location">
    <subcellularLocation>
        <location evidence="1">Nucleus</location>
    </subcellularLocation>
    <text evidence="1">Interaction with PIAS1 is required for localization to the nuclear periphery (By similarity).</text>
</comment>
<comment type="PTM">
    <text evidence="1">Sumoylated by PIAS1, desumoylated by SENP1 (By similarity). Sumoylation of Lys-9 and Lys-127 not required for interaction with H1-5, transcriptional repression, inhibition of myoblast differentiation, or binding to gene promoters (By similarity).</text>
</comment>
<comment type="similarity">
    <text evidence="5">Belongs to the Msh homeobox family.</text>
</comment>
<name>MSX1_LEMCA</name>
<reference key="1">
    <citation type="journal article" date="2006" name="Mol. Biol. Evol.">
        <title>Molecular evolution of the primate developmental genes MSX1 and PAX9.</title>
        <authorList>
            <person name="Perry G.H."/>
            <person name="Verrelli B.C."/>
            <person name="Stone A.C."/>
        </authorList>
    </citation>
    <scope>NUCLEOTIDE SEQUENCE [GENOMIC DNA]</scope>
    <source>
        <strain>Isolate 6621</strain>
    </source>
</reference>
<feature type="chain" id="PRO_0000049087" description="Homeobox protein MSX-1">
    <location>
        <begin position="1" status="less than"/>
        <end position="297"/>
    </location>
</feature>
<feature type="DNA-binding region" description="Homeobox" evidence="3">
    <location>
        <begin position="166"/>
        <end position="225"/>
    </location>
</feature>
<feature type="region of interest" description="Disordered" evidence="4">
    <location>
        <begin position="1"/>
        <end position="50"/>
    </location>
</feature>
<feature type="region of interest" description="Disordered" evidence="4">
    <location>
        <begin position="64"/>
        <end position="93"/>
    </location>
</feature>
<feature type="region of interest" description="Disordered" evidence="4">
    <location>
        <begin position="129"/>
        <end position="157"/>
    </location>
</feature>
<feature type="compositionally biased region" description="Low complexity" evidence="4">
    <location>
        <begin position="25"/>
        <end position="38"/>
    </location>
</feature>
<feature type="compositionally biased region" description="Low complexity" evidence="4">
    <location>
        <begin position="71"/>
        <end position="88"/>
    </location>
</feature>
<feature type="cross-link" description="Glycyl lysine isopeptide (Lys-Gly) (interchain with G-Cter in SUMO)" evidence="1">
    <location>
        <position position="9"/>
    </location>
</feature>
<feature type="cross-link" description="Glycyl lysine isopeptide (Lys-Gly) (interchain with G-Cter in SUMO)" evidence="1">
    <location>
        <position position="127"/>
    </location>
</feature>
<feature type="non-terminal residue">
    <location>
        <position position="1"/>
    </location>
</feature>
<protein>
    <recommendedName>
        <fullName evidence="5">Homeobox protein MSX-1</fullName>
    </recommendedName>
    <alternativeName>
        <fullName>Msh homeobox 1-like protein</fullName>
    </alternativeName>
</protein>
<organism>
    <name type="scientific">Lemur catta</name>
    <name type="common">Ring-tailed lemur</name>
    <dbReference type="NCBI Taxonomy" id="9447"/>
    <lineage>
        <taxon>Eukaryota</taxon>
        <taxon>Metazoa</taxon>
        <taxon>Chordata</taxon>
        <taxon>Craniata</taxon>
        <taxon>Vertebrata</taxon>
        <taxon>Euteleostomi</taxon>
        <taxon>Mammalia</taxon>
        <taxon>Eutheria</taxon>
        <taxon>Euarchontoglires</taxon>
        <taxon>Primates</taxon>
        <taxon>Strepsirrhini</taxon>
        <taxon>Lemuriformes</taxon>
        <taxon>Lemuridae</taxon>
        <taxon>Lemur</taxon>
    </lineage>
</organism>
<gene>
    <name evidence="1" type="primary">MSX1</name>
</gene>
<keyword id="KW-0217">Developmental protein</keyword>
<keyword id="KW-0238">DNA-binding</keyword>
<keyword id="KW-0371">Homeobox</keyword>
<keyword id="KW-1017">Isopeptide bond</keyword>
<keyword id="KW-0539">Nucleus</keyword>
<keyword id="KW-0678">Repressor</keyword>
<keyword id="KW-0804">Transcription</keyword>
<keyword id="KW-0805">Transcription regulation</keyword>
<keyword id="KW-0832">Ubl conjugation</keyword>
<proteinExistence type="inferred from homology"/>